<keyword id="KW-0053">Apoptosis</keyword>
<keyword id="KW-0072">Autophagy</keyword>
<keyword id="KW-0963">Cytoplasm</keyword>
<keyword id="KW-0378">Hydrolase</keyword>
<keyword id="KW-0496">Mitochondrion</keyword>
<keyword id="KW-0539">Nucleus</keyword>
<keyword id="KW-1185">Reference proteome</keyword>
<protein>
    <recommendedName>
        <fullName evidence="5">Probable fructose-2,6-bisphosphatase TIGAR A</fullName>
        <ecNumber evidence="3">3.1.3.46</ecNumber>
    </recommendedName>
    <alternativeName>
        <fullName evidence="3">TP53-induced glycolysis and apoptosis regulator A</fullName>
    </alternativeName>
</protein>
<accession>Q29RA5</accession>
<comment type="function">
    <text evidence="2 3">Fructose-bisphosphatase hydrolyzing fructose-2,6-bisphosphate as well as fructose-1,6-bisphosphate. Acts as a negative regulator of glycolysis by lowering intracellular levels of fructose-2,6-bisphosphate in a p53/TP53-dependent manner, resulting in the pentose phosphate pathway (PPP) activation and NADPH production. Contributes to the generation of reduced glutathione to cause a decrease in intracellular reactive oxygen species (ROS) content, correlating with its ability to protect cells from oxidative or metabolic stress-induced cell death. May play a role in mitophagy inhibition.</text>
</comment>
<comment type="catalytic activity">
    <reaction evidence="3">
        <text>beta-D-fructose 2,6-bisphosphate + H2O = beta-D-fructose 6-phosphate + phosphate</text>
        <dbReference type="Rhea" id="RHEA:17289"/>
        <dbReference type="ChEBI" id="CHEBI:15377"/>
        <dbReference type="ChEBI" id="CHEBI:43474"/>
        <dbReference type="ChEBI" id="CHEBI:57634"/>
        <dbReference type="ChEBI" id="CHEBI:58579"/>
        <dbReference type="EC" id="3.1.3.46"/>
    </reaction>
</comment>
<comment type="subcellular location">
    <subcellularLocation>
        <location evidence="2">Cytoplasm</location>
    </subcellularLocation>
    <subcellularLocation>
        <location evidence="3">Nucleus</location>
    </subcellularLocation>
    <subcellularLocation>
        <location evidence="2">Mitochondrion</location>
    </subcellularLocation>
</comment>
<comment type="similarity">
    <text evidence="5">Belongs to the phosphoglycerate mutase family.</text>
</comment>
<comment type="caution">
    <text evidence="5">Not expected to have any kinase activity.</text>
</comment>
<name>TIGRA_DANRE</name>
<proteinExistence type="evidence at transcript level"/>
<gene>
    <name evidence="3" type="primary">tigara</name>
    <name type="ORF">zgc:136900</name>
</gene>
<feature type="chain" id="PRO_0000363067" description="Probable fructose-2,6-bisphosphatase TIGAR A">
    <location>
        <begin position="1"/>
        <end position="256"/>
    </location>
</feature>
<feature type="region of interest" description="Disordered" evidence="4">
    <location>
        <begin position="147"/>
        <end position="170"/>
    </location>
</feature>
<feature type="active site" description="Tele-phosphohistidine intermediate" evidence="1">
    <location>
        <position position="11"/>
    </location>
</feature>
<feature type="active site" description="Proton donor/acceptor" evidence="1">
    <location>
        <position position="89"/>
    </location>
</feature>
<feature type="site" description="Transition state stabilizer" evidence="1">
    <location>
        <position position="186"/>
    </location>
</feature>
<sequence length="256" mass="28180">MLAFGLTVVRHGETQCNKDGLLQGQKIDSLLSDIGIQQSEAAGQYLRDVKFTNVFVSNMKRAKQTAEIIVRNNRTCHDLELVADPSLIERSFGIAEGGRVIDMKNMAKAAGQPLPEFTPPEGETMEQVKLRIKDFLKAMYQRIANDHQDKVQDGGTSSADESTEAPAGLANDGVSSVPVHALVVGHGAYMSIAMRYFFEDLKCPVPRGLDPAQQFSICPNTGMCRFIITLKCSSVDIALSDIKCVFINRRDHFKTN</sequence>
<dbReference type="EC" id="3.1.3.46" evidence="3"/>
<dbReference type="EMBL" id="BC114302">
    <property type="protein sequence ID" value="AAI14303.1"/>
    <property type="molecule type" value="mRNA"/>
</dbReference>
<dbReference type="RefSeq" id="NP_001034925.1">
    <property type="nucleotide sequence ID" value="NM_001039836.1"/>
</dbReference>
<dbReference type="SMR" id="Q29RA5"/>
<dbReference type="FunCoup" id="Q29RA5">
    <property type="interactions" value="97"/>
</dbReference>
<dbReference type="STRING" id="7955.ENSDARP00000097862"/>
<dbReference type="PaxDb" id="7955-ENSDARP00000097862"/>
<dbReference type="Ensembl" id="ENSDART00000111158">
    <property type="protein sequence ID" value="ENSDARP00000097862"/>
    <property type="gene ID" value="ENSDARG00000051749"/>
</dbReference>
<dbReference type="GeneID" id="664696"/>
<dbReference type="KEGG" id="dre:664696"/>
<dbReference type="AGR" id="ZFIN:ZDB-GENE-060312-25"/>
<dbReference type="CTD" id="664696"/>
<dbReference type="ZFIN" id="ZDB-GENE-060312-25">
    <property type="gene designation" value="tigara"/>
</dbReference>
<dbReference type="eggNOG" id="KOG0235">
    <property type="taxonomic scope" value="Eukaryota"/>
</dbReference>
<dbReference type="HOGENOM" id="CLU_033323_16_0_1"/>
<dbReference type="InParanoid" id="Q29RA5"/>
<dbReference type="OMA" id="PTIQCVC"/>
<dbReference type="OrthoDB" id="354304at2759"/>
<dbReference type="PhylomeDB" id="Q29RA5"/>
<dbReference type="TreeFam" id="TF329053"/>
<dbReference type="Reactome" id="R-DRE-5628897">
    <property type="pathway name" value="TP53 Regulates Metabolic Genes"/>
</dbReference>
<dbReference type="PRO" id="PR:Q29RA5"/>
<dbReference type="Proteomes" id="UP000000437">
    <property type="component" value="Chromosome 25"/>
</dbReference>
<dbReference type="Bgee" id="ENSDARG00000051749">
    <property type="expression patterns" value="Expressed in muscle tissue and 15 other cell types or tissues"/>
</dbReference>
<dbReference type="GO" id="GO:0005737">
    <property type="term" value="C:cytoplasm"/>
    <property type="evidence" value="ECO:0000250"/>
    <property type="project" value="UniProtKB"/>
</dbReference>
<dbReference type="GO" id="GO:0005829">
    <property type="term" value="C:cytosol"/>
    <property type="evidence" value="ECO:0000318"/>
    <property type="project" value="GO_Central"/>
</dbReference>
<dbReference type="GO" id="GO:0005741">
    <property type="term" value="C:mitochondrial outer membrane"/>
    <property type="evidence" value="ECO:0000250"/>
    <property type="project" value="UniProtKB"/>
</dbReference>
<dbReference type="GO" id="GO:0005739">
    <property type="term" value="C:mitochondrion"/>
    <property type="evidence" value="ECO:0000250"/>
    <property type="project" value="UniProtKB"/>
</dbReference>
<dbReference type="GO" id="GO:0005634">
    <property type="term" value="C:nucleus"/>
    <property type="evidence" value="ECO:0000250"/>
    <property type="project" value="UniProtKB"/>
</dbReference>
<dbReference type="GO" id="GO:0004331">
    <property type="term" value="F:fructose-2,6-bisphosphate 2-phosphatase activity"/>
    <property type="evidence" value="ECO:0000250"/>
    <property type="project" value="UniProtKB"/>
</dbReference>
<dbReference type="GO" id="GO:0006915">
    <property type="term" value="P:apoptotic process"/>
    <property type="evidence" value="ECO:0007669"/>
    <property type="project" value="UniProtKB-KW"/>
</dbReference>
<dbReference type="GO" id="GO:0006914">
    <property type="term" value="P:autophagy"/>
    <property type="evidence" value="ECO:0007669"/>
    <property type="project" value="UniProtKB-KW"/>
</dbReference>
<dbReference type="GO" id="GO:0045820">
    <property type="term" value="P:negative regulation of glycolytic process"/>
    <property type="evidence" value="ECO:0000318"/>
    <property type="project" value="GO_Central"/>
</dbReference>
<dbReference type="GO" id="GO:0043456">
    <property type="term" value="P:regulation of pentose-phosphate shunt"/>
    <property type="evidence" value="ECO:0000318"/>
    <property type="project" value="GO_Central"/>
</dbReference>
<dbReference type="CDD" id="cd07067">
    <property type="entry name" value="HP_PGM_like"/>
    <property type="match status" value="1"/>
</dbReference>
<dbReference type="Gene3D" id="3.40.50.1240">
    <property type="entry name" value="Phosphoglycerate mutase-like"/>
    <property type="match status" value="1"/>
</dbReference>
<dbReference type="InterPro" id="IPR013078">
    <property type="entry name" value="His_Pase_superF_clade-1"/>
</dbReference>
<dbReference type="InterPro" id="IPR029033">
    <property type="entry name" value="His_PPase_superfam"/>
</dbReference>
<dbReference type="InterPro" id="IPR001345">
    <property type="entry name" value="PG/BPGM_mutase_AS"/>
</dbReference>
<dbReference type="InterPro" id="IPR051695">
    <property type="entry name" value="Phosphoglycerate_Mutase"/>
</dbReference>
<dbReference type="PANTHER" id="PTHR46517">
    <property type="entry name" value="FRUCTOSE-2,6-BISPHOSPHATASE TIGAR"/>
    <property type="match status" value="1"/>
</dbReference>
<dbReference type="PANTHER" id="PTHR46517:SF3">
    <property type="entry name" value="FRUCTOSE-2,6-BISPHOSPHATASE TIGAR A-RELATED"/>
    <property type="match status" value="1"/>
</dbReference>
<dbReference type="Pfam" id="PF00300">
    <property type="entry name" value="His_Phos_1"/>
    <property type="match status" value="1"/>
</dbReference>
<dbReference type="SMART" id="SM00855">
    <property type="entry name" value="PGAM"/>
    <property type="match status" value="1"/>
</dbReference>
<dbReference type="SUPFAM" id="SSF53254">
    <property type="entry name" value="Phosphoglycerate mutase-like"/>
    <property type="match status" value="1"/>
</dbReference>
<dbReference type="PROSITE" id="PS00175">
    <property type="entry name" value="PG_MUTASE"/>
    <property type="match status" value="1"/>
</dbReference>
<reference key="1">
    <citation type="submission" date="2006-03" db="EMBL/GenBank/DDBJ databases">
        <authorList>
            <consortium name="NIH - Zebrafish Gene Collection (ZGC) project"/>
        </authorList>
    </citation>
    <scope>NUCLEOTIDE SEQUENCE [LARGE SCALE MRNA]</scope>
</reference>
<evidence type="ECO:0000250" key="1">
    <source>
        <dbReference type="UniProtKB" id="Q7ZVE3"/>
    </source>
</evidence>
<evidence type="ECO:0000250" key="2">
    <source>
        <dbReference type="UniProtKB" id="Q8BZA9"/>
    </source>
</evidence>
<evidence type="ECO:0000250" key="3">
    <source>
        <dbReference type="UniProtKB" id="Q9NQ88"/>
    </source>
</evidence>
<evidence type="ECO:0000256" key="4">
    <source>
        <dbReference type="SAM" id="MobiDB-lite"/>
    </source>
</evidence>
<evidence type="ECO:0000305" key="5"/>
<organism>
    <name type="scientific">Danio rerio</name>
    <name type="common">Zebrafish</name>
    <name type="synonym">Brachydanio rerio</name>
    <dbReference type="NCBI Taxonomy" id="7955"/>
    <lineage>
        <taxon>Eukaryota</taxon>
        <taxon>Metazoa</taxon>
        <taxon>Chordata</taxon>
        <taxon>Craniata</taxon>
        <taxon>Vertebrata</taxon>
        <taxon>Euteleostomi</taxon>
        <taxon>Actinopterygii</taxon>
        <taxon>Neopterygii</taxon>
        <taxon>Teleostei</taxon>
        <taxon>Ostariophysi</taxon>
        <taxon>Cypriniformes</taxon>
        <taxon>Danionidae</taxon>
        <taxon>Danioninae</taxon>
        <taxon>Danio</taxon>
    </lineage>
</organism>